<feature type="signal peptide" evidence="2">
    <location>
        <begin position="1"/>
        <end position="21"/>
    </location>
</feature>
<feature type="chain" id="PRO_0000016350" description="Integrin beta-6">
    <location>
        <begin position="22"/>
        <end position="788"/>
    </location>
</feature>
<feature type="topological domain" description="Extracellular" evidence="2">
    <location>
        <begin position="22"/>
        <end position="709"/>
    </location>
</feature>
<feature type="transmembrane region" description="Helical" evidence="2">
    <location>
        <begin position="710"/>
        <end position="730"/>
    </location>
</feature>
<feature type="topological domain" description="Cytoplasmic" evidence="2">
    <location>
        <begin position="731"/>
        <end position="788"/>
    </location>
</feature>
<feature type="domain" description="PSI" evidence="2">
    <location>
        <begin position="22"/>
        <end position="71"/>
    </location>
</feature>
<feature type="domain" description="VWFA" evidence="1">
    <location>
        <begin position="131"/>
        <end position="371"/>
    </location>
</feature>
<feature type="domain" description="I-EGF 1" evidence="3">
    <location>
        <begin position="456"/>
        <end position="491"/>
    </location>
</feature>
<feature type="domain" description="I-EGF 2" evidence="3">
    <location>
        <begin position="492"/>
        <end position="538"/>
    </location>
</feature>
<feature type="domain" description="I-EGF 3" evidence="3">
    <location>
        <begin position="539"/>
        <end position="575"/>
    </location>
</feature>
<feature type="domain" description="I-EGF 4" evidence="3">
    <location>
        <begin position="576"/>
        <end position="615"/>
    </location>
</feature>
<feature type="region of interest" description="Interaction with HAX1" evidence="8">
    <location>
        <begin position="731"/>
        <end position="758"/>
    </location>
</feature>
<feature type="binding site" description="in MIDAS binding site" evidence="13 17">
    <location>
        <position position="140"/>
    </location>
    <ligand>
        <name>Mg(2+)</name>
        <dbReference type="ChEBI" id="CHEBI:18420"/>
    </ligand>
</feature>
<feature type="binding site" description="in MIDAS binding site" evidence="13 17 18">
    <location>
        <position position="142"/>
    </location>
    <ligand>
        <name>Mg(2+)</name>
        <dbReference type="ChEBI" id="CHEBI:18420"/>
    </ligand>
</feature>
<feature type="binding site" description="in ADMIDAS binding site" evidence="13 17">
    <location>
        <position position="144"/>
    </location>
    <ligand>
        <name>Ca(2+)</name>
        <dbReference type="ChEBI" id="CHEBI:29108"/>
        <label>1</label>
    </ligand>
</feature>
<feature type="binding site" description="in MIDAS binding site" evidence="1">
    <location>
        <position position="144"/>
    </location>
    <ligand>
        <name>Mg(2+)</name>
        <dbReference type="ChEBI" id="CHEBI:18420"/>
    </ligand>
</feature>
<feature type="binding site" description="in ADMIDAS binding site" evidence="13 17 18">
    <location>
        <position position="147"/>
    </location>
    <ligand>
        <name>Ca(2+)</name>
        <dbReference type="ChEBI" id="CHEBI:29108"/>
        <label>1</label>
    </ligand>
</feature>
<feature type="binding site" description="in ADMIDAS binding site" evidence="13 17 18">
    <location>
        <position position="148"/>
    </location>
    <ligand>
        <name>Ca(2+)</name>
        <dbReference type="ChEBI" id="CHEBI:29108"/>
        <label>1</label>
    </ligand>
</feature>
<feature type="binding site" description="in LIMBS binding site" evidence="13 18">
    <location>
        <position position="179"/>
    </location>
    <ligand>
        <name>Ca(2+)</name>
        <dbReference type="ChEBI" id="CHEBI:29108"/>
        <label>2</label>
    </ligand>
</feature>
<feature type="binding site" description="in LIMBS binding site" evidence="13 18">
    <location>
        <position position="235"/>
    </location>
    <ligand>
        <name>Ca(2+)</name>
        <dbReference type="ChEBI" id="CHEBI:29108"/>
        <label>2</label>
    </ligand>
</feature>
<feature type="binding site" description="in LIMBS binding site" evidence="13 18">
    <location>
        <position position="237"/>
    </location>
    <ligand>
        <name>Ca(2+)</name>
        <dbReference type="ChEBI" id="CHEBI:29108"/>
        <label>2</label>
    </ligand>
</feature>
<feature type="binding site" description="in LIMBS binding site" evidence="13 18">
    <location>
        <position position="239"/>
    </location>
    <ligand>
        <name>Ca(2+)</name>
        <dbReference type="ChEBI" id="CHEBI:29108"/>
        <label>2</label>
    </ligand>
</feature>
<feature type="binding site" description="in LIMBS binding site" evidence="13 18">
    <location>
        <position position="240"/>
    </location>
    <ligand>
        <name>Ca(2+)</name>
        <dbReference type="ChEBI" id="CHEBI:29108"/>
        <label>2</label>
    </ligand>
</feature>
<feature type="binding site" description="in MIDAS binding site" evidence="13 17 18">
    <location>
        <position position="240"/>
    </location>
    <ligand>
        <name>Mg(2+)</name>
        <dbReference type="ChEBI" id="CHEBI:18420"/>
    </ligand>
</feature>
<feature type="binding site" description="in ADMIDAS binding site and liganded-open conformation" evidence="1">
    <location>
        <position position="271"/>
    </location>
    <ligand>
        <name>Ca(2+)</name>
        <dbReference type="ChEBI" id="CHEBI:29108"/>
        <label>1</label>
    </ligand>
</feature>
<feature type="binding site" description="in ADMIDAS binding site and unliganded-closed conformation" evidence="13 17">
    <location>
        <position position="355"/>
    </location>
    <ligand>
        <name>Ca(2+)</name>
        <dbReference type="ChEBI" id="CHEBI:29108"/>
        <label>1</label>
    </ligand>
</feature>
<feature type="glycosylation site" description="N-linked (GlcNAc...) asparagine" evidence="13 17 18">
    <location>
        <position position="48"/>
    </location>
</feature>
<feature type="glycosylation site" description="N-linked (GlcNAc...) asparagine" evidence="13 17 18">
    <location>
        <position position="97"/>
    </location>
</feature>
<feature type="glycosylation site" description="N-linked (GlcNAc...) asparagine" evidence="13 14 17 18">
    <location>
        <position position="260"/>
    </location>
</feature>
<feature type="glycosylation site" description="N-linked (GlcNAc...) asparagine" evidence="13 17 18">
    <location>
        <position position="387"/>
    </location>
</feature>
<feature type="glycosylation site" description="N-linked (GlcNAc...) asparagine" evidence="2">
    <location>
        <position position="396"/>
    </location>
</feature>
<feature type="glycosylation site" description="N-linked (GlcNAc...) asparagine" evidence="2">
    <location>
        <position position="463"/>
    </location>
</feature>
<feature type="glycosylation site" description="N-linked (GlcNAc...) asparagine" evidence="2">
    <location>
        <position position="471"/>
    </location>
</feature>
<feature type="glycosylation site" description="N-linked (GlcNAc...) asparagine" evidence="2">
    <location>
        <position position="541"/>
    </location>
</feature>
<feature type="glycosylation site" description="N-linked (GlcNAc...) asparagine" evidence="2">
    <location>
        <position position="575"/>
    </location>
</feature>
<feature type="disulfide bond" evidence="13 17 18">
    <location>
        <begin position="23"/>
        <end position="41"/>
    </location>
</feature>
<feature type="disulfide bond" evidence="13 17 18">
    <location>
        <begin position="31"/>
        <end position="454"/>
    </location>
</feature>
<feature type="disulfide bond" evidence="13 17 18">
    <location>
        <begin position="34"/>
        <end position="59"/>
    </location>
</feature>
<feature type="disulfide bond" evidence="13 17 18">
    <location>
        <begin position="44"/>
        <end position="70"/>
    </location>
</feature>
<feature type="disulfide bond" evidence="13 14 17 18 19 20">
    <location>
        <begin position="197"/>
        <end position="204"/>
    </location>
</feature>
<feature type="disulfide bond" evidence="13 14 17 18 19 20">
    <location>
        <begin position="252"/>
        <end position="293"/>
    </location>
</feature>
<feature type="disulfide bond" evidence="13 17 18">
    <location>
        <begin position="394"/>
        <end position="406"/>
    </location>
</feature>
<feature type="disulfide bond" evidence="13 17 18">
    <location>
        <begin position="426"/>
        <end position="452"/>
    </location>
</feature>
<feature type="disulfide bond" evidence="3 13 18">
    <location>
        <begin position="456"/>
        <end position="476"/>
    </location>
</feature>
<feature type="disulfide bond" evidence="3 13 18">
    <location>
        <begin position="467"/>
        <end position="479"/>
    </location>
</feature>
<feature type="disulfide bond" evidence="3 13 18">
    <location>
        <begin position="481"/>
        <end position="490"/>
    </location>
</feature>
<feature type="disulfide bond" evidence="3">
    <location>
        <begin position="492"/>
        <end position="519"/>
    </location>
</feature>
<feature type="disulfide bond" evidence="3">
    <location>
        <begin position="502"/>
        <end position="517"/>
    </location>
</feature>
<feature type="disulfide bond" evidence="3">
    <location>
        <begin position="511"/>
        <end position="522"/>
    </location>
</feature>
<feature type="disulfide bond" evidence="3">
    <location>
        <begin position="524"/>
        <end position="537"/>
    </location>
</feature>
<feature type="disulfide bond" evidence="3">
    <location>
        <begin position="539"/>
        <end position="560"/>
    </location>
</feature>
<feature type="disulfide bond" evidence="3">
    <location>
        <begin position="544"/>
        <end position="558"/>
    </location>
</feature>
<feature type="disulfide bond" evidence="3">
    <location>
        <begin position="552"/>
        <end position="563"/>
    </location>
</feature>
<feature type="disulfide bond" evidence="3">
    <location>
        <begin position="565"/>
        <end position="574"/>
    </location>
</feature>
<feature type="disulfide bond" evidence="3">
    <location>
        <begin position="576"/>
        <end position="599"/>
    </location>
</feature>
<feature type="disulfide bond" evidence="3">
    <location>
        <begin position="583"/>
        <end position="597"/>
    </location>
</feature>
<feature type="disulfide bond" evidence="3">
    <location>
        <begin position="591"/>
        <end position="602"/>
    </location>
</feature>
<feature type="disulfide bond" evidence="3">
    <location>
        <begin position="604"/>
        <end position="614"/>
    </location>
</feature>
<feature type="disulfide bond" evidence="1">
    <location>
        <begin position="617"/>
        <end position="620"/>
    </location>
</feature>
<feature type="disulfide bond" evidence="1">
    <location>
        <begin position="624"/>
        <end position="670"/>
    </location>
</feature>
<feature type="disulfide bond" evidence="1">
    <location>
        <begin position="630"/>
        <end position="649"/>
    </location>
</feature>
<feature type="disulfide bond" evidence="1">
    <location>
        <begin position="633"/>
        <end position="645"/>
    </location>
</feature>
<feature type="disulfide bond" evidence="1">
    <location>
        <begin position="678"/>
        <end position="702"/>
    </location>
</feature>
<feature type="splice variant" id="VSP_055189" description="In isoform 2." evidence="16">
    <location>
        <begin position="554"/>
        <end position="660"/>
    </location>
</feature>
<feature type="sequence variant" id="VAR_073328" description="In AI1H; dbSNP:rs140015315." evidence="10">
    <original>A</original>
    <variation>T</variation>
    <location>
        <position position="143"/>
    </location>
</feature>
<feature type="sequence variant" id="VAR_073329" description="In AI1H; dbSNP:rs730880298." evidence="11">
    <original>P</original>
    <variation>T</variation>
    <location>
        <position position="196"/>
    </location>
</feature>
<feature type="sequence variant" id="VAR_073330" description="In AI1H; dbSNP:rs730882118." evidence="10">
    <original>H</original>
    <variation>Q</variation>
    <location>
        <position position="275"/>
    </location>
</feature>
<feature type="sequence variant" id="VAR_049636" description="In dbSNP:rs2305820.">
    <original>P</original>
    <variation>T</variation>
    <location>
        <position position="437"/>
    </location>
</feature>
<feature type="turn" evidence="22">
    <location>
        <begin position="24"/>
        <end position="26"/>
    </location>
</feature>
<feature type="helix" evidence="22">
    <location>
        <begin position="31"/>
        <end position="34"/>
    </location>
</feature>
<feature type="strand" evidence="22">
    <location>
        <begin position="42"/>
        <end position="44"/>
    </location>
</feature>
<feature type="helix" evidence="22">
    <location>
        <begin position="62"/>
        <end position="68"/>
    </location>
</feature>
<feature type="turn" evidence="22">
    <location>
        <begin position="72"/>
        <end position="74"/>
    </location>
</feature>
<feature type="strand" evidence="22">
    <location>
        <begin position="81"/>
        <end position="86"/>
    </location>
</feature>
<feature type="helix" evidence="22">
    <location>
        <begin position="98"/>
        <end position="100"/>
    </location>
</feature>
<feature type="strand" evidence="22">
    <location>
        <begin position="108"/>
        <end position="113"/>
    </location>
</feature>
<feature type="strand" evidence="22">
    <location>
        <begin position="119"/>
        <end position="126"/>
    </location>
</feature>
<feature type="strand" evidence="23">
    <location>
        <begin position="133"/>
        <end position="140"/>
    </location>
</feature>
<feature type="helix" evidence="23">
    <location>
        <begin position="143"/>
        <end position="145"/>
    </location>
</feature>
<feature type="helix" evidence="23">
    <location>
        <begin position="146"/>
        <end position="151"/>
    </location>
</feature>
<feature type="helix" evidence="23">
    <location>
        <begin position="152"/>
        <end position="154"/>
    </location>
</feature>
<feature type="helix" evidence="23">
    <location>
        <begin position="155"/>
        <end position="166"/>
    </location>
</feature>
<feature type="strand" evidence="23">
    <location>
        <begin position="170"/>
        <end position="177"/>
    </location>
</feature>
<feature type="turn" evidence="22">
    <location>
        <begin position="183"/>
        <end position="185"/>
    </location>
</feature>
<feature type="helix" evidence="23">
    <location>
        <begin position="190"/>
        <end position="194"/>
    </location>
</feature>
<feature type="turn" evidence="23">
    <location>
        <begin position="196"/>
        <end position="201"/>
    </location>
</feature>
<feature type="strand" evidence="23">
    <location>
        <begin position="209"/>
        <end position="218"/>
    </location>
</feature>
<feature type="helix" evidence="23">
    <location>
        <begin position="220"/>
        <end position="229"/>
    </location>
</feature>
<feature type="strand" evidence="22">
    <location>
        <begin position="236"/>
        <end position="241"/>
    </location>
</feature>
<feature type="helix" evidence="23">
    <location>
        <begin position="242"/>
        <end position="251"/>
    </location>
</feature>
<feature type="helix" evidence="23">
    <location>
        <begin position="253"/>
        <end position="256"/>
    </location>
</feature>
<feature type="strand" evidence="23">
    <location>
        <begin position="262"/>
        <end position="272"/>
    </location>
</feature>
<feature type="helix" evidence="23">
    <location>
        <begin position="277"/>
        <end position="283"/>
    </location>
</feature>
<feature type="strand" evidence="23">
    <location>
        <begin position="297"/>
        <end position="301"/>
    </location>
</feature>
<feature type="turn" evidence="23">
    <location>
        <begin position="302"/>
        <end position="306"/>
    </location>
</feature>
<feature type="helix" evidence="23">
    <location>
        <begin position="312"/>
        <end position="321"/>
    </location>
</feature>
<feature type="strand" evidence="23">
    <location>
        <begin position="324"/>
        <end position="330"/>
    </location>
</feature>
<feature type="helix" evidence="23">
    <location>
        <begin position="332"/>
        <end position="344"/>
    </location>
</feature>
<feature type="strand" evidence="23">
    <location>
        <begin position="349"/>
        <end position="352"/>
    </location>
</feature>
<feature type="helix" evidence="23">
    <location>
        <begin position="360"/>
        <end position="371"/>
    </location>
</feature>
<feature type="strand" evidence="22">
    <location>
        <begin position="375"/>
        <end position="382"/>
    </location>
</feature>
<feature type="strand" evidence="22">
    <location>
        <begin position="387"/>
        <end position="393"/>
    </location>
</feature>
<feature type="turn" evidence="21">
    <location>
        <begin position="395"/>
        <end position="397"/>
    </location>
</feature>
<feature type="strand" evidence="22">
    <location>
        <begin position="399"/>
        <end position="401"/>
    </location>
</feature>
<feature type="strand" evidence="22">
    <location>
        <begin position="414"/>
        <end position="422"/>
    </location>
</feature>
<feature type="strand" evidence="22">
    <location>
        <begin position="431"/>
        <end position="437"/>
    </location>
</feature>
<feature type="strand" evidence="22">
    <location>
        <begin position="444"/>
        <end position="450"/>
    </location>
</feature>
<feature type="helix" evidence="21">
    <location>
        <begin position="455"/>
        <end position="457"/>
    </location>
</feature>
<feature type="strand" evidence="22">
    <location>
        <begin position="467"/>
        <end position="475"/>
    </location>
</feature>
<feature type="strand" evidence="22">
    <location>
        <begin position="478"/>
        <end position="481"/>
    </location>
</feature>
<protein>
    <recommendedName>
        <fullName>Integrin beta-6</fullName>
    </recommendedName>
</protein>
<name>ITB6_HUMAN</name>
<reference key="1">
    <citation type="journal article" date="1990" name="J. Biol. Chem.">
        <title>Complete amino acid sequence of a novel integrin beta subunit (beta 6) identified in epithelial cells using the polymerase chain reaction.</title>
        <authorList>
            <person name="Sheppard D."/>
            <person name="Rozzo C."/>
            <person name="Starr L."/>
            <person name="Quaranta V."/>
            <person name="Erle D.J."/>
            <person name="Pytela R."/>
        </authorList>
    </citation>
    <scope>NUCLEOTIDE SEQUENCE [MRNA] (ISOFORM 1)</scope>
    <source>
        <tissue>Pancreas</tissue>
    </source>
</reference>
<reference key="2">
    <citation type="submission" date="2000-09" db="EMBL/GenBank/DDBJ databases">
        <authorList>
            <person name="Askins J."/>
        </authorList>
    </citation>
    <scope>SEQUENCE REVISION TO 18-24; 158; 642 AND 719</scope>
</reference>
<reference key="3">
    <citation type="journal article" date="2004" name="Nat. Genet.">
        <title>Complete sequencing and characterization of 21,243 full-length human cDNAs.</title>
        <authorList>
            <person name="Ota T."/>
            <person name="Suzuki Y."/>
            <person name="Nishikawa T."/>
            <person name="Otsuki T."/>
            <person name="Sugiyama T."/>
            <person name="Irie R."/>
            <person name="Wakamatsu A."/>
            <person name="Hayashi K."/>
            <person name="Sato H."/>
            <person name="Nagai K."/>
            <person name="Kimura K."/>
            <person name="Makita H."/>
            <person name="Sekine M."/>
            <person name="Obayashi M."/>
            <person name="Nishi T."/>
            <person name="Shibahara T."/>
            <person name="Tanaka T."/>
            <person name="Ishii S."/>
            <person name="Yamamoto J."/>
            <person name="Saito K."/>
            <person name="Kawai Y."/>
            <person name="Isono Y."/>
            <person name="Nakamura Y."/>
            <person name="Nagahari K."/>
            <person name="Murakami K."/>
            <person name="Yasuda T."/>
            <person name="Iwayanagi T."/>
            <person name="Wagatsuma M."/>
            <person name="Shiratori A."/>
            <person name="Sudo H."/>
            <person name="Hosoiri T."/>
            <person name="Kaku Y."/>
            <person name="Kodaira H."/>
            <person name="Kondo H."/>
            <person name="Sugawara M."/>
            <person name="Takahashi M."/>
            <person name="Kanda K."/>
            <person name="Yokoi T."/>
            <person name="Furuya T."/>
            <person name="Kikkawa E."/>
            <person name="Omura Y."/>
            <person name="Abe K."/>
            <person name="Kamihara K."/>
            <person name="Katsuta N."/>
            <person name="Sato K."/>
            <person name="Tanikawa M."/>
            <person name="Yamazaki M."/>
            <person name="Ninomiya K."/>
            <person name="Ishibashi T."/>
            <person name="Yamashita H."/>
            <person name="Murakawa K."/>
            <person name="Fujimori K."/>
            <person name="Tanai H."/>
            <person name="Kimata M."/>
            <person name="Watanabe M."/>
            <person name="Hiraoka S."/>
            <person name="Chiba Y."/>
            <person name="Ishida S."/>
            <person name="Ono Y."/>
            <person name="Takiguchi S."/>
            <person name="Watanabe S."/>
            <person name="Yosida M."/>
            <person name="Hotuta T."/>
            <person name="Kusano J."/>
            <person name="Kanehori K."/>
            <person name="Takahashi-Fujii A."/>
            <person name="Hara H."/>
            <person name="Tanase T.-O."/>
            <person name="Nomura Y."/>
            <person name="Togiya S."/>
            <person name="Komai F."/>
            <person name="Hara R."/>
            <person name="Takeuchi K."/>
            <person name="Arita M."/>
            <person name="Imose N."/>
            <person name="Musashino K."/>
            <person name="Yuuki H."/>
            <person name="Oshima A."/>
            <person name="Sasaki N."/>
            <person name="Aotsuka S."/>
            <person name="Yoshikawa Y."/>
            <person name="Matsunawa H."/>
            <person name="Ichihara T."/>
            <person name="Shiohata N."/>
            <person name="Sano S."/>
            <person name="Moriya S."/>
            <person name="Momiyama H."/>
            <person name="Satoh N."/>
            <person name="Takami S."/>
            <person name="Terashima Y."/>
            <person name="Suzuki O."/>
            <person name="Nakagawa S."/>
            <person name="Senoh A."/>
            <person name="Mizoguchi H."/>
            <person name="Goto Y."/>
            <person name="Shimizu F."/>
            <person name="Wakebe H."/>
            <person name="Hishigaki H."/>
            <person name="Watanabe T."/>
            <person name="Sugiyama A."/>
            <person name="Takemoto M."/>
            <person name="Kawakami B."/>
            <person name="Yamazaki M."/>
            <person name="Watanabe K."/>
            <person name="Kumagai A."/>
            <person name="Itakura S."/>
            <person name="Fukuzumi Y."/>
            <person name="Fujimori Y."/>
            <person name="Komiyama M."/>
            <person name="Tashiro H."/>
            <person name="Tanigami A."/>
            <person name="Fujiwara T."/>
            <person name="Ono T."/>
            <person name="Yamada K."/>
            <person name="Fujii Y."/>
            <person name="Ozaki K."/>
            <person name="Hirao M."/>
            <person name="Ohmori Y."/>
            <person name="Kawabata A."/>
            <person name="Hikiji T."/>
            <person name="Kobatake N."/>
            <person name="Inagaki H."/>
            <person name="Ikema Y."/>
            <person name="Okamoto S."/>
            <person name="Okitani R."/>
            <person name="Kawakami T."/>
            <person name="Noguchi S."/>
            <person name="Itoh T."/>
            <person name="Shigeta K."/>
            <person name="Senba T."/>
            <person name="Matsumura K."/>
            <person name="Nakajima Y."/>
            <person name="Mizuno T."/>
            <person name="Morinaga M."/>
            <person name="Sasaki M."/>
            <person name="Togashi T."/>
            <person name="Oyama M."/>
            <person name="Hata H."/>
            <person name="Watanabe M."/>
            <person name="Komatsu T."/>
            <person name="Mizushima-Sugano J."/>
            <person name="Satoh T."/>
            <person name="Shirai Y."/>
            <person name="Takahashi Y."/>
            <person name="Nakagawa K."/>
            <person name="Okumura K."/>
            <person name="Nagase T."/>
            <person name="Nomura N."/>
            <person name="Kikuchi H."/>
            <person name="Masuho Y."/>
            <person name="Yamashita R."/>
            <person name="Nakai K."/>
            <person name="Yada T."/>
            <person name="Nakamura Y."/>
            <person name="Ohara O."/>
            <person name="Isogai T."/>
            <person name="Sugano S."/>
        </authorList>
    </citation>
    <scope>NUCLEOTIDE SEQUENCE [LARGE SCALE MRNA] (ISOFORM 1)</scope>
    <source>
        <tissue>Placenta</tissue>
    </source>
</reference>
<reference key="4">
    <citation type="journal article" date="2005" name="Nature">
        <title>Generation and annotation of the DNA sequences of human chromosomes 2 and 4.</title>
        <authorList>
            <person name="Hillier L.W."/>
            <person name="Graves T.A."/>
            <person name="Fulton R.S."/>
            <person name="Fulton L.A."/>
            <person name="Pepin K.H."/>
            <person name="Minx P."/>
            <person name="Wagner-McPherson C."/>
            <person name="Layman D."/>
            <person name="Wylie K."/>
            <person name="Sekhon M."/>
            <person name="Becker M.C."/>
            <person name="Fewell G.A."/>
            <person name="Delehaunty K.D."/>
            <person name="Miner T.L."/>
            <person name="Nash W.E."/>
            <person name="Kremitzki C."/>
            <person name="Oddy L."/>
            <person name="Du H."/>
            <person name="Sun H."/>
            <person name="Bradshaw-Cordum H."/>
            <person name="Ali J."/>
            <person name="Carter J."/>
            <person name="Cordes M."/>
            <person name="Harris A."/>
            <person name="Isak A."/>
            <person name="van Brunt A."/>
            <person name="Nguyen C."/>
            <person name="Du F."/>
            <person name="Courtney L."/>
            <person name="Kalicki J."/>
            <person name="Ozersky P."/>
            <person name="Abbott S."/>
            <person name="Armstrong J."/>
            <person name="Belter E.A."/>
            <person name="Caruso L."/>
            <person name="Cedroni M."/>
            <person name="Cotton M."/>
            <person name="Davidson T."/>
            <person name="Desai A."/>
            <person name="Elliott G."/>
            <person name="Erb T."/>
            <person name="Fronick C."/>
            <person name="Gaige T."/>
            <person name="Haakenson W."/>
            <person name="Haglund K."/>
            <person name="Holmes A."/>
            <person name="Harkins R."/>
            <person name="Kim K."/>
            <person name="Kruchowski S.S."/>
            <person name="Strong C.M."/>
            <person name="Grewal N."/>
            <person name="Goyea E."/>
            <person name="Hou S."/>
            <person name="Levy A."/>
            <person name="Martinka S."/>
            <person name="Mead K."/>
            <person name="McLellan M.D."/>
            <person name="Meyer R."/>
            <person name="Randall-Maher J."/>
            <person name="Tomlinson C."/>
            <person name="Dauphin-Kohlberg S."/>
            <person name="Kozlowicz-Reilly A."/>
            <person name="Shah N."/>
            <person name="Swearengen-Shahid S."/>
            <person name="Snider J."/>
            <person name="Strong J.T."/>
            <person name="Thompson J."/>
            <person name="Yoakum M."/>
            <person name="Leonard S."/>
            <person name="Pearman C."/>
            <person name="Trani L."/>
            <person name="Radionenko M."/>
            <person name="Waligorski J.E."/>
            <person name="Wang C."/>
            <person name="Rock S.M."/>
            <person name="Tin-Wollam A.-M."/>
            <person name="Maupin R."/>
            <person name="Latreille P."/>
            <person name="Wendl M.C."/>
            <person name="Yang S.-P."/>
            <person name="Pohl C."/>
            <person name="Wallis J.W."/>
            <person name="Spieth J."/>
            <person name="Bieri T.A."/>
            <person name="Berkowicz N."/>
            <person name="Nelson J.O."/>
            <person name="Osborne J."/>
            <person name="Ding L."/>
            <person name="Meyer R."/>
            <person name="Sabo A."/>
            <person name="Shotland Y."/>
            <person name="Sinha P."/>
            <person name="Wohldmann P.E."/>
            <person name="Cook L.L."/>
            <person name="Hickenbotham M.T."/>
            <person name="Eldred J."/>
            <person name="Williams D."/>
            <person name="Jones T.A."/>
            <person name="She X."/>
            <person name="Ciccarelli F.D."/>
            <person name="Izaurralde E."/>
            <person name="Taylor J."/>
            <person name="Schmutz J."/>
            <person name="Myers R.M."/>
            <person name="Cox D.R."/>
            <person name="Huang X."/>
            <person name="McPherson J.D."/>
            <person name="Mardis E.R."/>
            <person name="Clifton S.W."/>
            <person name="Warren W.C."/>
            <person name="Chinwalla A.T."/>
            <person name="Eddy S.R."/>
            <person name="Marra M.A."/>
            <person name="Ovcharenko I."/>
            <person name="Furey T.S."/>
            <person name="Miller W."/>
            <person name="Eichler E.E."/>
            <person name="Bork P."/>
            <person name="Suyama M."/>
            <person name="Torrents D."/>
            <person name="Waterston R.H."/>
            <person name="Wilson R.K."/>
        </authorList>
    </citation>
    <scope>NUCLEOTIDE SEQUENCE [LARGE SCALE GENOMIC DNA]</scope>
</reference>
<reference key="5">
    <citation type="submission" date="2005-09" db="EMBL/GenBank/DDBJ databases">
        <authorList>
            <person name="Mural R.J."/>
            <person name="Istrail S."/>
            <person name="Sutton G.G."/>
            <person name="Florea L."/>
            <person name="Halpern A.L."/>
            <person name="Mobarry C.M."/>
            <person name="Lippert R."/>
            <person name="Walenz B."/>
            <person name="Shatkay H."/>
            <person name="Dew I."/>
            <person name="Miller J.R."/>
            <person name="Flanigan M.J."/>
            <person name="Edwards N.J."/>
            <person name="Bolanos R."/>
            <person name="Fasulo D."/>
            <person name="Halldorsson B.V."/>
            <person name="Hannenhalli S."/>
            <person name="Turner R."/>
            <person name="Yooseph S."/>
            <person name="Lu F."/>
            <person name="Nusskern D.R."/>
            <person name="Shue B.C."/>
            <person name="Zheng X.H."/>
            <person name="Zhong F."/>
            <person name="Delcher A.L."/>
            <person name="Huson D.H."/>
            <person name="Kravitz S.A."/>
            <person name="Mouchard L."/>
            <person name="Reinert K."/>
            <person name="Remington K.A."/>
            <person name="Clark A.G."/>
            <person name="Waterman M.S."/>
            <person name="Eichler E.E."/>
            <person name="Adams M.D."/>
            <person name="Hunkapiller M.W."/>
            <person name="Myers E.W."/>
            <person name="Venter J.C."/>
        </authorList>
    </citation>
    <scope>NUCLEOTIDE SEQUENCE [LARGE SCALE GENOMIC DNA]</scope>
</reference>
<reference key="6">
    <citation type="journal article" date="2004" name="Genome Res.">
        <title>The status, quality, and expansion of the NIH full-length cDNA project: the Mammalian Gene Collection (MGC).</title>
        <authorList>
            <consortium name="The MGC Project Team"/>
        </authorList>
    </citation>
    <scope>NUCLEOTIDE SEQUENCE [LARGE SCALE MRNA] (ISOFORM 1)</scope>
</reference>
<reference key="7">
    <citation type="journal article" date="1992" name="Int. Immunol.">
        <title>The gene organization of the human beta 7 subunit, the common beta subunit of the leukocyte integrins HML-1 and LPAM-1.</title>
        <authorList>
            <person name="Jiang W.-M."/>
            <person name="Jenkins D."/>
            <person name="Yuan Q."/>
            <person name="Leung E."/>
            <person name="Choo K.H."/>
            <person name="Watson J.D."/>
            <person name="Krissansen G.W."/>
        </authorList>
    </citation>
    <scope>NUCLEOTIDE SEQUENCE [GENOMIC DNA] OF 116-197</scope>
</reference>
<reference key="8">
    <citation type="journal article" date="1997" name="Virology">
        <title>Integrin alpha v beta 6 enhances coxsackievirus B1 lytic infection of human colon cancer cells.</title>
        <authorList>
            <person name="Agrez M.V."/>
            <person name="Shafren D.R."/>
            <person name="Gu X."/>
            <person name="Cox K."/>
            <person name="Sheppard D."/>
            <person name="Barry R.D."/>
        </authorList>
    </citation>
    <scope>FUNCTION (MICROBIAL INFECTION)</scope>
    <scope>INTERACTION WITH COXSACKIEVIRUS B1 CAPSID PROTEINS</scope>
</reference>
<reference key="9">
    <citation type="journal article" date="2002" name="J. Cell Biol.">
        <title>Different splice variants of filamin-B affect myogenesis, subcellular distribution, and determine binding to integrin (beta) subunits.</title>
        <authorList>
            <person name="van Der Flier A."/>
            <person name="Kuikman I."/>
            <person name="Kramer D."/>
            <person name="Geerts D."/>
            <person name="Kreft M."/>
            <person name="Takafuta T."/>
            <person name="Shapiro S.S."/>
            <person name="Sonnenberg A."/>
        </authorList>
    </citation>
    <scope>INTERACTION WITH FLNB</scope>
    <source>
        <tissue>Keratinocyte</tissue>
        <tissue>Skeletal muscle</tissue>
    </source>
</reference>
<reference key="10">
    <citation type="journal article" date="2004" name="J. Cell Biol.">
        <title>Integrin alphaVbeta6-mediated activation of latent TGF-beta requires the latent TGF-beta binding protein-1.</title>
        <authorList>
            <person name="Annes J.P."/>
            <person name="Chen Y."/>
            <person name="Munger J.S."/>
            <person name="Rifkin D.B."/>
        </authorList>
    </citation>
    <scope>FUNCTION</scope>
</reference>
<reference key="11">
    <citation type="journal article" date="2004" name="J. Virol.">
        <title>Integrin alpha v beta 6 is an RGD-dependent receptor for coxsackievirus A9.</title>
        <authorList>
            <person name="Williams C.H."/>
            <person name="Kajander T."/>
            <person name="Hyypia T."/>
            <person name="Jackson T."/>
            <person name="Sheppard D."/>
            <person name="Stanway G."/>
        </authorList>
    </citation>
    <scope>FUNCTION (MICROBIAL INFECTION)</scope>
    <scope>INTERACTION WITH COXSACKIEVIRUS A9 CAPSID PROTEINS</scope>
</reference>
<reference key="12">
    <citation type="journal article" date="2007" name="Cancer Res.">
        <title>HS1-associated protein X-1 regulates carcinoma cell migration and invasion via clathrin-mediated endocytosis of integrin alphavbeta6.</title>
        <authorList>
            <person name="Ramsay A.G."/>
            <person name="Keppler M.D."/>
            <person name="Jazayeri M."/>
            <person name="Thomas G.J."/>
            <person name="Parsons M."/>
            <person name="Violette S."/>
            <person name="Weinreb P."/>
            <person name="Hart I.R."/>
            <person name="Marshall J.F."/>
        </authorList>
    </citation>
    <scope>INTERACTION WITH HAX1</scope>
    <scope>FUNCTION</scope>
</reference>
<reference key="13">
    <citation type="journal article" date="2007" name="J. Biol. Chem.">
        <title>alphaVbeta6 is a novel receptor for human fibrillin-1. Comparative studies of molecular determinants underlying integrin-rgd affinity and specificity.</title>
        <authorList>
            <person name="Jovanovic J."/>
            <person name="Takagi J."/>
            <person name="Choulier L."/>
            <person name="Abrescia N.G."/>
            <person name="Stuart D.I."/>
            <person name="van der Merwe P.A."/>
            <person name="Mardon H.J."/>
            <person name="Handford P.A."/>
        </authorList>
    </citation>
    <scope>FUNCTION</scope>
    <scope>INTERACTION WITH FBN1</scope>
    <scope>SUBCELLULAR LOCATION</scope>
</reference>
<reference key="14">
    <citation type="journal article" date="2012" name="Mol. Biol. Cell">
        <title>GARP regulates the bioavailability and activation of TGFbeta.</title>
        <authorList>
            <person name="Wang R."/>
            <person name="Zhu J."/>
            <person name="Dong X."/>
            <person name="Shi M."/>
            <person name="Lu C."/>
            <person name="Springer T.A."/>
        </authorList>
    </citation>
    <scope>FUNCTION</scope>
    <scope>INTERACTION WITH TGFB1</scope>
</reference>
<reference key="15">
    <citation type="journal article" date="2013" name="PLoS Pathog.">
        <title>alphavbeta6- and alphavbeta8-integrins serve as interchangeable receptors for HSV gH/gL to promote endocytosis and activation of membrane fusion.</title>
        <authorList>
            <person name="Gianni T."/>
            <person name="Salvioli S."/>
            <person name="Chesnokova L.S."/>
            <person name="Hutt-Fletcher L.M."/>
            <person name="Campadelli-Fiume G."/>
        </authorList>
    </citation>
    <scope>FUNCTION (MICROBIAL INFECTION)</scope>
    <scope>INTERACTION WITH HERPES SIMPLES-1/HHV-1 GH:GL PROTEINS</scope>
</reference>
<reference evidence="17 18" key="16">
    <citation type="journal article" date="2014" name="Nat. Struct. Mol. Biol.">
        <title>Structural determinants of integrin beta-subunit specificity for latent TGF-beta.</title>
        <authorList>
            <person name="Dong X."/>
            <person name="Hudson N.E."/>
            <person name="Lu C."/>
            <person name="Springer T.A."/>
        </authorList>
    </citation>
    <scope>X-RAY CRYSTALLOGRAPHY (2.50 ANGSTROMS) OF 18-491 IN COMPLEX WITH ITGAV; TGFB3 PEPTIDE; CALCIUM AND MANGANESE</scope>
    <scope>FUNCTION</scope>
    <scope>GLYCOSYLATION AT ASN-48; ASN-97; ASN-260 AND ASN-387</scope>
    <scope>DISULFIDE BONDS</scope>
</reference>
<reference evidence="19 20" key="17">
    <citation type="journal article" date="2017" name="Nature">
        <title>Force interacts with macromolecular structure in activation of TGF-beta.</title>
        <authorList>
            <person name="Dong X."/>
            <person name="Zhao B."/>
            <person name="Iacob R.E."/>
            <person name="Zhu J."/>
            <person name="Koksal A.C."/>
            <person name="Lu C."/>
            <person name="Engen J.R."/>
            <person name="Springer T.A."/>
        </authorList>
    </citation>
    <scope>X-RAY CRYSTALLOGRAPHY (2.25 ANGSTROMS) OF 128-378 IN COMPLEX WITH TGFB1 AND ITGAV</scope>
    <scope>INTERACTION WITH TGFB1</scope>
    <scope>CALCIUM-BINDING</scope>
    <scope>FUNCTION</scope>
    <scope>DISULFIDE BONDS</scope>
    <scope>GLYCOSYLATION AT ASN-260</scope>
</reference>
<reference key="18">
    <citation type="journal article" date="2014" name="Hum. Mol. Genet.">
        <title>A missense mutation in ITGB6 causes pitted hypomineralized amelogenesis imperfecta.</title>
        <authorList>
            <person name="Poulter J.A."/>
            <person name="Brookes S.J."/>
            <person name="Shore R.C."/>
            <person name="Smith C.E."/>
            <person name="Abi Farraj L."/>
            <person name="Kirkham J."/>
            <person name="Inglehearn C.F."/>
            <person name="Mighell A.J."/>
        </authorList>
    </citation>
    <scope>INVOLVEMENT IN AI1H</scope>
    <scope>VARIANT AI1H THR-196</scope>
</reference>
<reference key="19">
    <citation type="journal article" date="2014" name="Hum. Mol. Genet.">
        <title>ITGB6 loss-of-function mutations cause autosomal recessive amelogenesis imperfecta.</title>
        <authorList>
            <person name="Wang S.K."/>
            <person name="Choi M."/>
            <person name="Richardson A.S."/>
            <person name="Reid B.M."/>
            <person name="Lin B.P."/>
            <person name="Wang S.J."/>
            <person name="Kim J.W."/>
            <person name="Simmer J.P."/>
            <person name="Hu J.C."/>
        </authorList>
    </citation>
    <scope>INVOLVEMENT IN AI1H</scope>
    <scope>VARIANTS AI1H THR-143 AND GLN-275</scope>
</reference>
<gene>
    <name type="primary">ITGB6</name>
</gene>
<proteinExistence type="evidence at protein level"/>
<organism>
    <name type="scientific">Homo sapiens</name>
    <name type="common">Human</name>
    <dbReference type="NCBI Taxonomy" id="9606"/>
    <lineage>
        <taxon>Eukaryota</taxon>
        <taxon>Metazoa</taxon>
        <taxon>Chordata</taxon>
        <taxon>Craniata</taxon>
        <taxon>Vertebrata</taxon>
        <taxon>Euteleostomi</taxon>
        <taxon>Mammalia</taxon>
        <taxon>Eutheria</taxon>
        <taxon>Euarchontoglires</taxon>
        <taxon>Primates</taxon>
        <taxon>Haplorrhini</taxon>
        <taxon>Catarrhini</taxon>
        <taxon>Hominidae</taxon>
        <taxon>Homo</taxon>
    </lineage>
</organism>
<accession>P18564</accession>
<accession>B2R9W5</accession>
<accession>C9JA97</accession>
<accession>Q0VA95</accession>
<accession>Q16500</accession>
<accession>Q53RG5</accession>
<accession>Q53RR6</accession>
<keyword id="KW-0002">3D-structure</keyword>
<keyword id="KW-0025">Alternative splicing</keyword>
<keyword id="KW-0986">Amelogenesis imperfecta</keyword>
<keyword id="KW-0106">Calcium</keyword>
<keyword id="KW-0130">Cell adhesion</keyword>
<keyword id="KW-0965">Cell junction</keyword>
<keyword id="KW-1003">Cell membrane</keyword>
<keyword id="KW-0225">Disease variant</keyword>
<keyword id="KW-1015">Disulfide bond</keyword>
<keyword id="KW-0245">EGF-like domain</keyword>
<keyword id="KW-0325">Glycoprotein</keyword>
<keyword id="KW-1183">Host cell receptor for virus entry</keyword>
<keyword id="KW-0945">Host-virus interaction</keyword>
<keyword id="KW-0401">Integrin</keyword>
<keyword id="KW-0460">Magnesium</keyword>
<keyword id="KW-0472">Membrane</keyword>
<keyword id="KW-0479">Metal-binding</keyword>
<keyword id="KW-1267">Proteomics identification</keyword>
<keyword id="KW-0675">Receptor</keyword>
<keyword id="KW-1185">Reference proteome</keyword>
<keyword id="KW-0677">Repeat</keyword>
<keyword id="KW-0732">Signal</keyword>
<keyword id="KW-0812">Transmembrane</keyword>
<keyword id="KW-1133">Transmembrane helix</keyword>
<sequence>MGIELLCLFFLFLGRNDHVQGGCALGGAETCEDCLLIGPQCAWCAQENFTHPSGVGERCDTPANLLAKGCQLNFIENPVSQVEILKNKPLSVGRQKNSSDIVQIAPQSLILKLRPGGAQTLQVHVRQTEDYPVDLYYLMDLSASMDDDLNTIKELGSRLSKEMSKLTSNFRLGFGSFVEKPVSPFVKTTPEEIANPCSSIPYFCLPTFGFKHILPLTNDAERFNEIVKNQKISANIDTPEGGFDAIMQAAVCKEKIGWRNDSLHLLVFVSDADSHFGMDSKLAGIVIPNDGLCHLDSKNEYSMSTVLEYPTIGQLIDKLVQNNVLLIFAVTQEQVHLYENYAKLIPGATVGLLQKDSGNILQLIISAYEELRSEVELEVLGDTEGLNLSFTAICNNGTLFQHQKKCSHMKVGDTASFSVTVNIPHCERRSRHIIIKPVGLGDALELLVSPECNCDCQKEVEVNSSKCHHGNGSFQCGVCACHPGHMGPRCECGEDMLSTDSCKEAPDHPSCSGRGDCYCGQCICHLSPYGNIYGPYCQCDNFSCVRHKGLLCGGNGDCDCGECVCRSGWTGEYCNCTTSTDSCVSEDGVLCSGRGDCVCGKCVCTNPGASGPTCERCPTCGDPCNSKRSCIECHLSAAGQAREECVDKCKLAGATISEEEDFSKDGSVSCSLQGENECLITFLITTDNEGKTIIHSINEKDCPKPPNIPMIMLGVSLAILLIGVVLLCIWKLLVSFHDRKEVAKFEAERSKAKWQTGTNPLYRGSTSTFKNVTYKHREKQKVDLSTDC</sequence>
<dbReference type="EMBL" id="M35198">
    <property type="protein sequence ID" value="AAA36122.2"/>
    <property type="molecule type" value="mRNA"/>
</dbReference>
<dbReference type="EMBL" id="AC092153">
    <property type="protein sequence ID" value="AAX93093.1"/>
    <property type="molecule type" value="Genomic_DNA"/>
</dbReference>
<dbReference type="EMBL" id="AK313944">
    <property type="protein sequence ID" value="BAG36662.1"/>
    <property type="molecule type" value="mRNA"/>
</dbReference>
<dbReference type="EMBL" id="AC080166">
    <property type="protein sequence ID" value="AAY24053.1"/>
    <property type="molecule type" value="Genomic_DNA"/>
</dbReference>
<dbReference type="EMBL" id="CH471058">
    <property type="protein sequence ID" value="EAX11390.1"/>
    <property type="molecule type" value="Genomic_DNA"/>
</dbReference>
<dbReference type="EMBL" id="BC121178">
    <property type="protein sequence ID" value="AAI21179.1"/>
    <property type="molecule type" value="mRNA"/>
</dbReference>
<dbReference type="EMBL" id="S49380">
    <property type="protein sequence ID" value="AAB23690.1"/>
    <property type="molecule type" value="Genomic_DNA"/>
</dbReference>
<dbReference type="CCDS" id="CCDS2212.1">
    <molecule id="P18564-1"/>
</dbReference>
<dbReference type="CCDS" id="CCDS63040.1">
    <molecule id="P18564-2"/>
</dbReference>
<dbReference type="PIR" id="A37057">
    <property type="entry name" value="A37057"/>
</dbReference>
<dbReference type="RefSeq" id="NP_000879.2">
    <molecule id="P18564-1"/>
    <property type="nucleotide sequence ID" value="NM_000888.4"/>
</dbReference>
<dbReference type="RefSeq" id="NP_001269282.1">
    <molecule id="P18564-1"/>
    <property type="nucleotide sequence ID" value="NM_001282353.2"/>
</dbReference>
<dbReference type="RefSeq" id="NP_001269284.1">
    <molecule id="P18564-2"/>
    <property type="nucleotide sequence ID" value="NM_001282355.2"/>
</dbReference>
<dbReference type="RefSeq" id="NP_001269317.1">
    <property type="nucleotide sequence ID" value="NM_001282388.1"/>
</dbReference>
<dbReference type="PDB" id="4UM8">
    <property type="method" value="X-ray"/>
    <property type="resolution" value="2.85 A"/>
    <property type="chains" value="B/D=1-788"/>
</dbReference>
<dbReference type="PDB" id="4UM9">
    <property type="method" value="X-ray"/>
    <property type="resolution" value="2.50 A"/>
    <property type="chains" value="B/D=18-491"/>
</dbReference>
<dbReference type="PDB" id="5FFG">
    <property type="method" value="X-ray"/>
    <property type="resolution" value="2.25 A"/>
    <property type="chains" value="B=128-378"/>
</dbReference>
<dbReference type="PDB" id="5FFO">
    <property type="method" value="X-ray"/>
    <property type="resolution" value="3.49 A"/>
    <property type="chains" value="B/F=128-378"/>
</dbReference>
<dbReference type="PDB" id="5NEM">
    <property type="method" value="EM"/>
    <property type="resolution" value="3.10 A"/>
    <property type="chains" value="B=22-491"/>
</dbReference>
<dbReference type="PDB" id="5NER">
    <property type="method" value="EM"/>
    <property type="resolution" value="3.10 A"/>
    <property type="chains" value="B=22-491"/>
</dbReference>
<dbReference type="PDB" id="5NET">
    <property type="method" value="EM"/>
    <property type="resolution" value="3.10 A"/>
    <property type="chains" value="B=22-491"/>
</dbReference>
<dbReference type="PDB" id="5NEU">
    <property type="method" value="EM"/>
    <property type="resolution" value="3.10 A"/>
    <property type="chains" value="B=22-491"/>
</dbReference>
<dbReference type="PDB" id="8TCG">
    <property type="method" value="EM"/>
    <property type="resolution" value="3.40 A"/>
    <property type="chains" value="B=130-371"/>
</dbReference>
<dbReference type="PDB" id="9CZ7">
    <property type="method" value="X-ray"/>
    <property type="resolution" value="2.57 A"/>
    <property type="chains" value="B=22-491"/>
</dbReference>
<dbReference type="PDB" id="9CZA">
    <property type="method" value="X-ray"/>
    <property type="resolution" value="2.49 A"/>
    <property type="chains" value="B=22-491"/>
</dbReference>
<dbReference type="PDB" id="9CZD">
    <property type="method" value="X-ray"/>
    <property type="resolution" value="2.23 A"/>
    <property type="chains" value="B=22-491"/>
</dbReference>
<dbReference type="PDB" id="9CZF">
    <property type="method" value="X-ray"/>
    <property type="resolution" value="2.53 A"/>
    <property type="chains" value="B=22-491"/>
</dbReference>
<dbReference type="PDBsum" id="4UM8"/>
<dbReference type="PDBsum" id="4UM9"/>
<dbReference type="PDBsum" id="5FFG"/>
<dbReference type="PDBsum" id="5FFO"/>
<dbReference type="PDBsum" id="5NEM"/>
<dbReference type="PDBsum" id="5NER"/>
<dbReference type="PDBsum" id="5NET"/>
<dbReference type="PDBsum" id="5NEU"/>
<dbReference type="PDBsum" id="8TCG"/>
<dbReference type="PDBsum" id="9CZ7"/>
<dbReference type="PDBsum" id="9CZA"/>
<dbReference type="PDBsum" id="9CZD"/>
<dbReference type="PDBsum" id="9CZF"/>
<dbReference type="EMDB" id="EMD-3632"/>
<dbReference type="EMDB" id="EMD-3633"/>
<dbReference type="EMDB" id="EMD-3634"/>
<dbReference type="EMDB" id="EMD-3635"/>
<dbReference type="EMDB" id="EMD-41154"/>
<dbReference type="SMR" id="P18564"/>
<dbReference type="BioGRID" id="109900">
    <property type="interactions" value="12"/>
</dbReference>
<dbReference type="ComplexPortal" id="CPX-1820">
    <property type="entry name" value="Integrin alphav-beta6 complex"/>
</dbReference>
<dbReference type="CORUM" id="P18564"/>
<dbReference type="DIP" id="DIP-59187N"/>
<dbReference type="ELM" id="P18564"/>
<dbReference type="FunCoup" id="P18564">
    <property type="interactions" value="655"/>
</dbReference>
<dbReference type="IntAct" id="P18564">
    <property type="interactions" value="4"/>
</dbReference>
<dbReference type="STRING" id="9606.ENSP00000283249"/>
<dbReference type="BindingDB" id="P18564"/>
<dbReference type="ChEMBL" id="CHEMBL2111416"/>
<dbReference type="DrugBank" id="DB16515">
    <property type="generic name" value="PLN-74809"/>
</dbReference>
<dbReference type="GuidetoPHARMACOLOGY" id="2460"/>
<dbReference type="GlyConnect" id="1419">
    <property type="glycosylation" value="7 N-Linked glycans (2 sites)"/>
</dbReference>
<dbReference type="GlyCosmos" id="P18564">
    <property type="glycosylation" value="9 sites, 7 glycans"/>
</dbReference>
<dbReference type="GlyGen" id="P18564">
    <property type="glycosylation" value="11 sites, 20 N-linked glycans (3 sites), 1 O-linked glycan (1 site)"/>
</dbReference>
<dbReference type="iPTMnet" id="P18564"/>
<dbReference type="PhosphoSitePlus" id="P18564"/>
<dbReference type="SwissPalm" id="P18564"/>
<dbReference type="BioMuta" id="ITGB6"/>
<dbReference type="DMDM" id="13432176"/>
<dbReference type="jPOST" id="P18564"/>
<dbReference type="MassIVE" id="P18564"/>
<dbReference type="PaxDb" id="9606-ENSP00000283249"/>
<dbReference type="PeptideAtlas" id="P18564"/>
<dbReference type="ProteomicsDB" id="53577">
    <molecule id="P18564-1"/>
</dbReference>
<dbReference type="ProteomicsDB" id="9297"/>
<dbReference type="Pumba" id="P18564"/>
<dbReference type="ABCD" id="P18564">
    <property type="antibodies" value="49 sequenced antibodies"/>
</dbReference>
<dbReference type="Antibodypedia" id="33727">
    <property type="antibodies" value="349 antibodies from 29 providers"/>
</dbReference>
<dbReference type="DNASU" id="3694"/>
<dbReference type="Ensembl" id="ENST00000283249.7">
    <molecule id="P18564-1"/>
    <property type="protein sequence ID" value="ENSP00000283249.2"/>
    <property type="gene ID" value="ENSG00000115221.13"/>
</dbReference>
<dbReference type="Ensembl" id="ENST00000409872.1">
    <molecule id="P18564-1"/>
    <property type="protein sequence ID" value="ENSP00000386367.1"/>
    <property type="gene ID" value="ENSG00000115221.13"/>
</dbReference>
<dbReference type="Ensembl" id="ENST00000409967.6">
    <molecule id="P18564-2"/>
    <property type="protein sequence ID" value="ENSP00000386828.2"/>
    <property type="gene ID" value="ENSG00000115221.13"/>
</dbReference>
<dbReference type="GeneID" id="3694"/>
<dbReference type="KEGG" id="hsa:3694"/>
<dbReference type="MANE-Select" id="ENST00000283249.7">
    <property type="protein sequence ID" value="ENSP00000283249.2"/>
    <property type="RefSeq nucleotide sequence ID" value="NM_000888.5"/>
    <property type="RefSeq protein sequence ID" value="NP_000879.2"/>
</dbReference>
<dbReference type="UCSC" id="uc010fou.4">
    <molecule id="P18564-1"/>
    <property type="organism name" value="human"/>
</dbReference>
<dbReference type="AGR" id="HGNC:6161"/>
<dbReference type="CTD" id="3694"/>
<dbReference type="DisGeNET" id="3694"/>
<dbReference type="GeneCards" id="ITGB6"/>
<dbReference type="HGNC" id="HGNC:6161">
    <property type="gene designation" value="ITGB6"/>
</dbReference>
<dbReference type="HPA" id="ENSG00000115221">
    <property type="expression patterns" value="Tissue enhanced (kidney, skeletal muscle, tongue)"/>
</dbReference>
<dbReference type="MalaCards" id="ITGB6"/>
<dbReference type="MIM" id="147558">
    <property type="type" value="gene"/>
</dbReference>
<dbReference type="MIM" id="616221">
    <property type="type" value="phenotype"/>
</dbReference>
<dbReference type="neXtProt" id="NX_P18564"/>
<dbReference type="OpenTargets" id="ENSG00000115221"/>
<dbReference type="Orphanet" id="2850">
    <property type="disease" value="Alopecia-intellectual disability syndrome"/>
</dbReference>
<dbReference type="Orphanet" id="100032">
    <property type="disease" value="Hypocalcified amelogenesis imperfecta"/>
</dbReference>
<dbReference type="Orphanet" id="100031">
    <property type="disease" value="Hypoplastic amelogenesis imperfecta"/>
</dbReference>
<dbReference type="PharmGKB" id="PA29960"/>
<dbReference type="VEuPathDB" id="HostDB:ENSG00000115221"/>
<dbReference type="eggNOG" id="KOG1226">
    <property type="taxonomic scope" value="Eukaryota"/>
</dbReference>
<dbReference type="GeneTree" id="ENSGT01110000267169"/>
<dbReference type="InParanoid" id="P18564"/>
<dbReference type="OMA" id="WIYTVEG"/>
<dbReference type="OrthoDB" id="410592at2759"/>
<dbReference type="PAN-GO" id="P18564">
    <property type="GO annotations" value="8 GO annotations based on evolutionary models"/>
</dbReference>
<dbReference type="PhylomeDB" id="P18564"/>
<dbReference type="TreeFam" id="TF105392"/>
<dbReference type="PathwayCommons" id="P18564"/>
<dbReference type="Reactome" id="R-HSA-1566948">
    <property type="pathway name" value="Elastic fibre formation"/>
</dbReference>
<dbReference type="Reactome" id="R-HSA-2129379">
    <property type="pathway name" value="Molecules associated with elastic fibres"/>
</dbReference>
<dbReference type="Reactome" id="R-HSA-216083">
    <property type="pathway name" value="Integrin cell surface interactions"/>
</dbReference>
<dbReference type="Reactome" id="R-HSA-2173789">
    <property type="pathway name" value="TGF-beta receptor signaling activates SMADs"/>
</dbReference>
<dbReference type="Reactome" id="R-HSA-3000178">
    <property type="pathway name" value="ECM proteoglycans"/>
</dbReference>
<dbReference type="SignaLink" id="P18564"/>
<dbReference type="SIGNOR" id="P18564"/>
<dbReference type="BioGRID-ORCS" id="3694">
    <property type="hits" value="13 hits in 1149 CRISPR screens"/>
</dbReference>
<dbReference type="ChiTaRS" id="ITGB6">
    <property type="organism name" value="human"/>
</dbReference>
<dbReference type="EvolutionaryTrace" id="P18564"/>
<dbReference type="GeneWiki" id="Integrin,_beta_6"/>
<dbReference type="GenomeRNAi" id="3694"/>
<dbReference type="Pharos" id="P18564">
    <property type="development level" value="Tbio"/>
</dbReference>
<dbReference type="PRO" id="PR:P18564"/>
<dbReference type="Proteomes" id="UP000005640">
    <property type="component" value="Chromosome 2"/>
</dbReference>
<dbReference type="RNAct" id="P18564">
    <property type="molecule type" value="protein"/>
</dbReference>
<dbReference type="Bgee" id="ENSG00000115221">
    <property type="expression patterns" value="Expressed in visceral pleura and 135 other cell types or tissues"/>
</dbReference>
<dbReference type="ExpressionAtlas" id="P18564">
    <property type="expression patterns" value="baseline and differential"/>
</dbReference>
<dbReference type="GO" id="GO:0009986">
    <property type="term" value="C:cell surface"/>
    <property type="evidence" value="ECO:0000318"/>
    <property type="project" value="GO_Central"/>
</dbReference>
<dbReference type="GO" id="GO:0009897">
    <property type="term" value="C:external side of plasma membrane"/>
    <property type="evidence" value="ECO:0007669"/>
    <property type="project" value="Ensembl"/>
</dbReference>
<dbReference type="GO" id="GO:0005925">
    <property type="term" value="C:focal adhesion"/>
    <property type="evidence" value="ECO:0000314"/>
    <property type="project" value="UniProtKB"/>
</dbReference>
<dbReference type="GO" id="GO:0034685">
    <property type="term" value="C:integrin alphav-beta6 complex"/>
    <property type="evidence" value="ECO:0000314"/>
    <property type="project" value="UniProtKB"/>
</dbReference>
<dbReference type="GO" id="GO:0008305">
    <property type="term" value="C:integrin complex"/>
    <property type="evidence" value="ECO:0000304"/>
    <property type="project" value="ProtInc"/>
</dbReference>
<dbReference type="GO" id="GO:0005886">
    <property type="term" value="C:plasma membrane"/>
    <property type="evidence" value="ECO:0000304"/>
    <property type="project" value="Reactome"/>
</dbReference>
<dbReference type="GO" id="GO:0043235">
    <property type="term" value="C:receptor complex"/>
    <property type="evidence" value="ECO:0000314"/>
    <property type="project" value="MGI"/>
</dbReference>
<dbReference type="GO" id="GO:0005178">
    <property type="term" value="F:integrin binding"/>
    <property type="evidence" value="ECO:0000318"/>
    <property type="project" value="GO_Central"/>
</dbReference>
<dbReference type="GO" id="GO:0046872">
    <property type="term" value="F:metal ion binding"/>
    <property type="evidence" value="ECO:0007669"/>
    <property type="project" value="UniProtKB-KW"/>
</dbReference>
<dbReference type="GO" id="GO:0140677">
    <property type="term" value="F:molecular function activator activity"/>
    <property type="evidence" value="ECO:0000270"/>
    <property type="project" value="DisProt"/>
</dbReference>
<dbReference type="GO" id="GO:0001618">
    <property type="term" value="F:virus receptor activity"/>
    <property type="evidence" value="ECO:0007669"/>
    <property type="project" value="UniProtKB-KW"/>
</dbReference>
<dbReference type="GO" id="GO:0060348">
    <property type="term" value="P:bone development"/>
    <property type="evidence" value="ECO:0007669"/>
    <property type="project" value="Ensembl"/>
</dbReference>
<dbReference type="GO" id="GO:0060435">
    <property type="term" value="P:bronchiole development"/>
    <property type="evidence" value="ECO:0007669"/>
    <property type="project" value="Ensembl"/>
</dbReference>
<dbReference type="GO" id="GO:0007155">
    <property type="term" value="P:cell adhesion"/>
    <property type="evidence" value="ECO:0000304"/>
    <property type="project" value="ProtInc"/>
</dbReference>
<dbReference type="GO" id="GO:0033627">
    <property type="term" value="P:cell adhesion mediated by integrin"/>
    <property type="evidence" value="ECO:0000314"/>
    <property type="project" value="UniProtKB"/>
</dbReference>
<dbReference type="GO" id="GO:0016477">
    <property type="term" value="P:cell migration"/>
    <property type="evidence" value="ECO:0000318"/>
    <property type="project" value="GO_Central"/>
</dbReference>
<dbReference type="GO" id="GO:0000902">
    <property type="term" value="P:cell morphogenesis"/>
    <property type="evidence" value="ECO:0007669"/>
    <property type="project" value="Ensembl"/>
</dbReference>
<dbReference type="GO" id="GO:0098609">
    <property type="term" value="P:cell-cell adhesion"/>
    <property type="evidence" value="ECO:0000318"/>
    <property type="project" value="GO_Central"/>
</dbReference>
<dbReference type="GO" id="GO:0007160">
    <property type="term" value="P:cell-matrix adhesion"/>
    <property type="evidence" value="ECO:0000318"/>
    <property type="project" value="GO_Central"/>
</dbReference>
<dbReference type="GO" id="GO:0071479">
    <property type="term" value="P:cellular response to ionizing radiation"/>
    <property type="evidence" value="ECO:0007669"/>
    <property type="project" value="Ensembl"/>
</dbReference>
<dbReference type="GO" id="GO:0070166">
    <property type="term" value="P:enamel mineralization"/>
    <property type="evidence" value="ECO:0007669"/>
    <property type="project" value="Ensembl"/>
</dbReference>
<dbReference type="GO" id="GO:0060022">
    <property type="term" value="P:hard palate development"/>
    <property type="evidence" value="ECO:0007669"/>
    <property type="project" value="Ensembl"/>
</dbReference>
<dbReference type="GO" id="GO:0006955">
    <property type="term" value="P:immune response"/>
    <property type="evidence" value="ECO:0007669"/>
    <property type="project" value="Ensembl"/>
</dbReference>
<dbReference type="GO" id="GO:0006954">
    <property type="term" value="P:inflammatory response"/>
    <property type="evidence" value="ECO:0007669"/>
    <property type="project" value="Ensembl"/>
</dbReference>
<dbReference type="GO" id="GO:0007229">
    <property type="term" value="P:integrin-mediated signaling pathway"/>
    <property type="evidence" value="ECO:0000318"/>
    <property type="project" value="GO_Central"/>
</dbReference>
<dbReference type="GO" id="GO:0061520">
    <property type="term" value="P:Langerhans cell differentiation"/>
    <property type="evidence" value="ECO:0007669"/>
    <property type="project" value="Ensembl"/>
</dbReference>
<dbReference type="GO" id="GO:0048286">
    <property type="term" value="P:lung alveolus development"/>
    <property type="evidence" value="ECO:0007669"/>
    <property type="project" value="Ensembl"/>
</dbReference>
<dbReference type="GO" id="GO:0055091">
    <property type="term" value="P:phospholipid homeostasis"/>
    <property type="evidence" value="ECO:0007669"/>
    <property type="project" value="Ensembl"/>
</dbReference>
<dbReference type="GO" id="GO:0009615">
    <property type="term" value="P:response to virus"/>
    <property type="evidence" value="ECO:0007669"/>
    <property type="project" value="Ensembl"/>
</dbReference>
<dbReference type="GO" id="GO:0043588">
    <property type="term" value="P:skin development"/>
    <property type="evidence" value="ECO:0007669"/>
    <property type="project" value="Ensembl"/>
</dbReference>
<dbReference type="GO" id="GO:0043129">
    <property type="term" value="P:surfactant homeostasis"/>
    <property type="evidence" value="ECO:0007669"/>
    <property type="project" value="Ensembl"/>
</dbReference>
<dbReference type="GO" id="GO:0071604">
    <property type="term" value="P:transforming growth factor beta production"/>
    <property type="evidence" value="ECO:0007669"/>
    <property type="project" value="Ensembl"/>
</dbReference>
<dbReference type="GO" id="GO:0007179">
    <property type="term" value="P:transforming growth factor beta receptor signaling pathway"/>
    <property type="evidence" value="ECO:0007669"/>
    <property type="project" value="Ensembl"/>
</dbReference>
<dbReference type="GO" id="GO:0042060">
    <property type="term" value="P:wound healing"/>
    <property type="evidence" value="ECO:0007669"/>
    <property type="project" value="Ensembl"/>
</dbReference>
<dbReference type="DisProt" id="DP02530"/>
<dbReference type="FunFam" id="1.20.5.100:FF:000004">
    <property type="entry name" value="Integrin beta"/>
    <property type="match status" value="1"/>
</dbReference>
<dbReference type="FunFam" id="2.10.25.10:FF:000043">
    <property type="entry name" value="Integrin beta"/>
    <property type="match status" value="1"/>
</dbReference>
<dbReference type="FunFam" id="2.10.25.10:FF:000075">
    <property type="entry name" value="Integrin beta"/>
    <property type="match status" value="1"/>
</dbReference>
<dbReference type="FunFam" id="2.10.25.10:FF:000328">
    <property type="entry name" value="Integrin beta"/>
    <property type="match status" value="1"/>
</dbReference>
<dbReference type="FunFam" id="2.60.40.1510:FF:000021">
    <property type="entry name" value="Integrin beta"/>
    <property type="match status" value="1"/>
</dbReference>
<dbReference type="FunFam" id="3.30.1680.10:FF:000002">
    <property type="entry name" value="Integrin beta"/>
    <property type="match status" value="1"/>
</dbReference>
<dbReference type="FunFam" id="3.40.50.410:FF:000002">
    <property type="entry name" value="Integrin beta"/>
    <property type="match status" value="1"/>
</dbReference>
<dbReference type="FunFam" id="4.10.1240.30:FF:000004">
    <property type="entry name" value="Integrin beta"/>
    <property type="match status" value="1"/>
</dbReference>
<dbReference type="Gene3D" id="4.10.1240.30">
    <property type="match status" value="1"/>
</dbReference>
<dbReference type="Gene3D" id="1.20.5.100">
    <property type="entry name" value="Cytochrome c1, transmembrane anchor, C-terminal"/>
    <property type="match status" value="1"/>
</dbReference>
<dbReference type="Gene3D" id="2.10.25.10">
    <property type="entry name" value="Laminin"/>
    <property type="match status" value="4"/>
</dbReference>
<dbReference type="Gene3D" id="3.30.1680.10">
    <property type="entry name" value="ligand-binding face of the semaphorins, domain 2"/>
    <property type="match status" value="1"/>
</dbReference>
<dbReference type="Gene3D" id="2.60.40.1510">
    <property type="entry name" value="ntegrin, alpha v. Chain A, domain 3"/>
    <property type="match status" value="1"/>
</dbReference>
<dbReference type="Gene3D" id="3.40.50.410">
    <property type="entry name" value="von Willebrand factor, type A domain"/>
    <property type="match status" value="1"/>
</dbReference>
<dbReference type="InterPro" id="IPR013111">
    <property type="entry name" value="EGF_extracell"/>
</dbReference>
<dbReference type="InterPro" id="IPR040622">
    <property type="entry name" value="I-EGF_1"/>
</dbReference>
<dbReference type="InterPro" id="IPR033760">
    <property type="entry name" value="Integrin_beta_N"/>
</dbReference>
<dbReference type="InterPro" id="IPR015812">
    <property type="entry name" value="Integrin_bsu"/>
</dbReference>
<dbReference type="InterPro" id="IPR014836">
    <property type="entry name" value="Integrin_bsu_cyt_dom"/>
</dbReference>
<dbReference type="InterPro" id="IPR012896">
    <property type="entry name" value="Integrin_bsu_tail"/>
</dbReference>
<dbReference type="InterPro" id="IPR036349">
    <property type="entry name" value="Integrin_bsu_tail_dom_sf"/>
</dbReference>
<dbReference type="InterPro" id="IPR002369">
    <property type="entry name" value="Integrin_bsu_VWA"/>
</dbReference>
<dbReference type="InterPro" id="IPR032695">
    <property type="entry name" value="Integrin_dom_sf"/>
</dbReference>
<dbReference type="InterPro" id="IPR016201">
    <property type="entry name" value="PSI"/>
</dbReference>
<dbReference type="InterPro" id="IPR036465">
    <property type="entry name" value="vWFA_dom_sf"/>
</dbReference>
<dbReference type="PANTHER" id="PTHR10082">
    <property type="entry name" value="INTEGRIN BETA SUBUNIT"/>
    <property type="match status" value="1"/>
</dbReference>
<dbReference type="PANTHER" id="PTHR10082:SF11">
    <property type="entry name" value="INTEGRIN BETA-6"/>
    <property type="match status" value="1"/>
</dbReference>
<dbReference type="Pfam" id="PF07974">
    <property type="entry name" value="EGF_2"/>
    <property type="match status" value="2"/>
</dbReference>
<dbReference type="Pfam" id="PF23105">
    <property type="entry name" value="EGF_integrin"/>
    <property type="match status" value="1"/>
</dbReference>
<dbReference type="Pfam" id="PF18372">
    <property type="entry name" value="I-EGF_1"/>
    <property type="match status" value="1"/>
</dbReference>
<dbReference type="Pfam" id="PF08725">
    <property type="entry name" value="Integrin_b_cyt"/>
    <property type="match status" value="1"/>
</dbReference>
<dbReference type="Pfam" id="PF07965">
    <property type="entry name" value="Integrin_B_tail"/>
    <property type="match status" value="1"/>
</dbReference>
<dbReference type="Pfam" id="PF00362">
    <property type="entry name" value="Integrin_beta"/>
    <property type="match status" value="1"/>
</dbReference>
<dbReference type="Pfam" id="PF17205">
    <property type="entry name" value="PSI_integrin"/>
    <property type="match status" value="1"/>
</dbReference>
<dbReference type="PIRSF" id="PIRSF002512">
    <property type="entry name" value="Integrin_B"/>
    <property type="match status" value="1"/>
</dbReference>
<dbReference type="PRINTS" id="PR01186">
    <property type="entry name" value="INTEGRINB"/>
</dbReference>
<dbReference type="SMART" id="SM00187">
    <property type="entry name" value="INB"/>
    <property type="match status" value="1"/>
</dbReference>
<dbReference type="SMART" id="SM01241">
    <property type="entry name" value="Integrin_b_cyt"/>
    <property type="match status" value="1"/>
</dbReference>
<dbReference type="SMART" id="SM01242">
    <property type="entry name" value="Integrin_B_tail"/>
    <property type="match status" value="1"/>
</dbReference>
<dbReference type="SMART" id="SM00423">
    <property type="entry name" value="PSI"/>
    <property type="match status" value="1"/>
</dbReference>
<dbReference type="SUPFAM" id="SSF57196">
    <property type="entry name" value="EGF/Laminin"/>
    <property type="match status" value="2"/>
</dbReference>
<dbReference type="SUPFAM" id="SSF69687">
    <property type="entry name" value="Integrin beta tail domain"/>
    <property type="match status" value="1"/>
</dbReference>
<dbReference type="SUPFAM" id="SSF69179">
    <property type="entry name" value="Integrin domains"/>
    <property type="match status" value="2"/>
</dbReference>
<dbReference type="SUPFAM" id="SSF103575">
    <property type="entry name" value="Plexin repeat"/>
    <property type="match status" value="1"/>
</dbReference>
<dbReference type="SUPFAM" id="SSF53300">
    <property type="entry name" value="vWA-like"/>
    <property type="match status" value="1"/>
</dbReference>
<dbReference type="PROSITE" id="PS00022">
    <property type="entry name" value="EGF_1"/>
    <property type="match status" value="2"/>
</dbReference>
<dbReference type="PROSITE" id="PS01186">
    <property type="entry name" value="EGF_2"/>
    <property type="match status" value="1"/>
</dbReference>
<dbReference type="PROSITE" id="PS00243">
    <property type="entry name" value="I_EGF_1"/>
    <property type="match status" value="3"/>
</dbReference>
<dbReference type="PROSITE" id="PS52047">
    <property type="entry name" value="I_EGF_2"/>
    <property type="match status" value="4"/>
</dbReference>
<comment type="function">
    <text evidence="5 7 8 9 13 14">Integrin alpha-V:beta-6 (ITGAV:ITGB6) is a receptor for fibronectin and cytotactin (PubMed:17158881, PubMed:17545607). It recognizes the sequence R-G-D in its ligands (PubMed:17158881, PubMed:17545607). Internalization of integrin alpha-V/beta-6 via clathrin-mediated endocytosis promotes carcinoma cell invasion (PubMed:17158881, PubMed:17545607). ITGAV:ITGB6 acts as a receptor for fibrillin-1 (FBN1) and mediates R-G-D-dependent cell adhesion to FBN1 (PubMed:17158881). Integrin alpha-V:beta-6 (ITGAV:ITGB6) mediates R-G-D-dependent release of transforming growth factor beta-1 (TGF-beta-1) from regulatory Latency-associated peptide (LAP), thereby playing a key role in TGF-beta-1 activation (PubMed:15184403, PubMed:22278742, PubMed:28117447).</text>
</comment>
<comment type="function">
    <text evidence="6 15">(Microbial infection) Integrin ITGAV:ITGB6 acts as a receptor for Coxsackievirus A9 and Coxsackievirus B1.</text>
</comment>
<comment type="function">
    <text evidence="12">(Microbial infection) Integrin ITGAV:ITGB6 acts as a receptor for Herpes simplex virus-1/HHV-1 (PubMed:24367260).</text>
</comment>
<comment type="subunit">
    <text evidence="4 7 8 9 14">Heterodimer of an alpha and a beta subunit (PubMed:11807098, PubMed:17158881, PubMed:17545607). Interacts with FLNB (PubMed:11807098). Interacts with HAX1 (PubMed:17545607). ITGAV:ITGB6 interacts with FBN1 (PubMed:17158881). ITGAV:ITGB6 interacts with TGFB1 (PubMed:22278742, PubMed:28117447).</text>
</comment>
<comment type="subunit">
    <text evidence="6 15">(Microbial infection) Integrin ITGAV:ITGB6 interacts with coxsackievirus A9, coxsackievirus B1 capsid proteins (PubMed:15194773, PubMed:9426447).</text>
</comment>
<comment type="subunit">
    <text evidence="12">(Microbial infection) Integrin ITGAV:ITGB6 interacts with herpes simplex virus-1/HHV-1 gH:gL proteins.</text>
</comment>
<comment type="interaction">
    <interactant intactId="EBI-2568070">
        <id>P18564</id>
    </interactant>
    <interactant intactId="EBI-298282">
        <id>P06756</id>
        <label>ITGAV</label>
    </interactant>
    <organismsDiffer>false</organismsDiffer>
    <experiments>8</experiments>
</comment>
<comment type="subcellular location">
    <subcellularLocation>
        <location evidence="8">Cell membrane</location>
        <topology evidence="16">Single-pass type I membrane protein</topology>
    </subcellularLocation>
    <subcellularLocation>
        <location evidence="7">Cell junction</location>
        <location evidence="7">Focal adhesion</location>
    </subcellularLocation>
</comment>
<comment type="alternative products">
    <event type="alternative splicing"/>
    <isoform>
        <id>P18564-1</id>
        <name>1</name>
        <sequence type="displayed"/>
    </isoform>
    <isoform>
        <id>P18564-2</id>
        <name>2</name>
        <sequence type="described" ref="VSP_055189"/>
    </isoform>
</comment>
<comment type="domain">
    <text evidence="1">The VWFA domain (or beta I domain) contains three cation-binding sites: the ligand-associated metal ion-binding site (LIMBS or SyMBS), the metal ion-dependent adhesion site (MIDAS), and the adjacent MIDAS site (ADMIDAS). This domain is also part of the ligand-binding site.</text>
</comment>
<comment type="disease" evidence="10 11">
    <disease id="DI-04338">
        <name>Amelogenesis imperfecta 1H</name>
        <acronym>AI1H</acronym>
        <description>A disorder characterized by defective enamel formation, resulting in hypoplastic and hypomineralized tooth enamel that may be rough, pitted, and/or discolored.</description>
        <dbReference type="MIM" id="616221"/>
    </disease>
    <text>The disease is caused by variants affecting the gene represented in this entry.</text>
</comment>
<comment type="similarity">
    <text evidence="16">Belongs to the integrin beta chain family.</text>
</comment>
<evidence type="ECO:0000250" key="1">
    <source>
        <dbReference type="UniProtKB" id="P05106"/>
    </source>
</evidence>
<evidence type="ECO:0000255" key="2"/>
<evidence type="ECO:0000255" key="3">
    <source>
        <dbReference type="PROSITE-ProRule" id="PRU01392"/>
    </source>
</evidence>
<evidence type="ECO:0000269" key="4">
    <source>
    </source>
</evidence>
<evidence type="ECO:0000269" key="5">
    <source>
    </source>
</evidence>
<evidence type="ECO:0000269" key="6">
    <source>
    </source>
</evidence>
<evidence type="ECO:0000269" key="7">
    <source>
    </source>
</evidence>
<evidence type="ECO:0000269" key="8">
    <source>
    </source>
</evidence>
<evidence type="ECO:0000269" key="9">
    <source>
    </source>
</evidence>
<evidence type="ECO:0000269" key="10">
    <source>
    </source>
</evidence>
<evidence type="ECO:0000269" key="11">
    <source>
    </source>
</evidence>
<evidence type="ECO:0000269" key="12">
    <source>
    </source>
</evidence>
<evidence type="ECO:0000269" key="13">
    <source>
    </source>
</evidence>
<evidence type="ECO:0000269" key="14">
    <source>
    </source>
</evidence>
<evidence type="ECO:0000269" key="15">
    <source>
    </source>
</evidence>
<evidence type="ECO:0000305" key="16"/>
<evidence type="ECO:0007744" key="17">
    <source>
        <dbReference type="PDB" id="4UM8"/>
    </source>
</evidence>
<evidence type="ECO:0007744" key="18">
    <source>
        <dbReference type="PDB" id="4UM9"/>
    </source>
</evidence>
<evidence type="ECO:0007744" key="19">
    <source>
        <dbReference type="PDB" id="5FFG"/>
    </source>
</evidence>
<evidence type="ECO:0007744" key="20">
    <source>
        <dbReference type="PDB" id="5FFO"/>
    </source>
</evidence>
<evidence type="ECO:0007829" key="21">
    <source>
        <dbReference type="PDB" id="4UM8"/>
    </source>
</evidence>
<evidence type="ECO:0007829" key="22">
    <source>
        <dbReference type="PDB" id="4UM9"/>
    </source>
</evidence>
<evidence type="ECO:0007829" key="23">
    <source>
        <dbReference type="PDB" id="5FFG"/>
    </source>
</evidence>